<keyword id="KW-1185">Reference proteome</keyword>
<organism>
    <name type="scientific">Oleidesulfovibrio alaskensis (strain ATCC BAA-1058 / DSM 17464 / G20)</name>
    <name type="common">Desulfovibrio alaskensis</name>
    <dbReference type="NCBI Taxonomy" id="207559"/>
    <lineage>
        <taxon>Bacteria</taxon>
        <taxon>Pseudomonadati</taxon>
        <taxon>Thermodesulfobacteriota</taxon>
        <taxon>Desulfovibrionia</taxon>
        <taxon>Desulfovibrionales</taxon>
        <taxon>Desulfovibrionaceae</taxon>
        <taxon>Oleidesulfovibrio</taxon>
    </lineage>
</organism>
<sequence>MLTDREVISTLDMLRNEHLDVRTVTLGISLFDCASDNFDRFATRVQDKISRYAEHLVATCDEVGEKYGIPVVNKRISISPMAVVGAPFGPDDMVRAAQVLDKAACNAGVDFLGGFTALVEKGMTKGDRALIDALPEALATTGRVCSSVNVGSSRSGINMDAVALMGDTIVQIAGRTADRDGIGCAKLVVFTNIPQDVPFMAGAYLGTGEPDVVINVGVSGPGVVKKAIDRAMQSGDRSLGDIAEVIKRTAFKVTRVGEIIGREVAERLGVPFGVADLSLAPAPQVGDSVGEIFQSVGLASIGVPGSTAVLAMLNDAVKKGGAFASSHVGGLSGAFIPVSEDLNIAEAAATGRLTLEKLEAMTSVCSVGLDMVAIPGDTPAATIAAIIADEMAIGMINNKTTAVRIIPVPGKKAGDTVSFGGLLGESAIMPVPGSGGSEKFIRLGGRMPAPIHSLKN</sequence>
<protein>
    <recommendedName>
        <fullName evidence="1">UPF0210 protein Dde_3704</fullName>
    </recommendedName>
</protein>
<evidence type="ECO:0000255" key="1">
    <source>
        <dbReference type="HAMAP-Rule" id="MF_01221"/>
    </source>
</evidence>
<dbReference type="EMBL" id="CP000112">
    <property type="protein sequence ID" value="ABB40497.1"/>
    <property type="molecule type" value="Genomic_DNA"/>
</dbReference>
<dbReference type="RefSeq" id="WP_011369367.1">
    <property type="nucleotide sequence ID" value="NC_007519.1"/>
</dbReference>
<dbReference type="SMR" id="Q30UZ9"/>
<dbReference type="STRING" id="207559.Dde_3704"/>
<dbReference type="KEGG" id="dde:Dde_3704"/>
<dbReference type="eggNOG" id="COG2848">
    <property type="taxonomic scope" value="Bacteria"/>
</dbReference>
<dbReference type="HOGENOM" id="CLU_048704_0_0_7"/>
<dbReference type="Proteomes" id="UP000002710">
    <property type="component" value="Chromosome"/>
</dbReference>
<dbReference type="CDD" id="cd08025">
    <property type="entry name" value="RNR_PFL_like_DUF711"/>
    <property type="match status" value="1"/>
</dbReference>
<dbReference type="Gene3D" id="3.20.70.20">
    <property type="match status" value="1"/>
</dbReference>
<dbReference type="HAMAP" id="MF_01221">
    <property type="entry name" value="UPF0210"/>
    <property type="match status" value="1"/>
</dbReference>
<dbReference type="InterPro" id="IPR007841">
    <property type="entry name" value="UPF0210"/>
</dbReference>
<dbReference type="NCBIfam" id="NF003700">
    <property type="entry name" value="PRK05313.1"/>
    <property type="match status" value="1"/>
</dbReference>
<dbReference type="PANTHER" id="PTHR37560:SF1">
    <property type="entry name" value="UPF0210 PROTEIN MJ1665"/>
    <property type="match status" value="1"/>
</dbReference>
<dbReference type="PANTHER" id="PTHR37560">
    <property type="entry name" value="UPF0210 PROTEIN SPR0218"/>
    <property type="match status" value="1"/>
</dbReference>
<dbReference type="Pfam" id="PF05167">
    <property type="entry name" value="DUF711"/>
    <property type="match status" value="1"/>
</dbReference>
<dbReference type="SUPFAM" id="SSF51998">
    <property type="entry name" value="PFL-like glycyl radical enzymes"/>
    <property type="match status" value="1"/>
</dbReference>
<proteinExistence type="inferred from homology"/>
<name>Y3704_OLEA2</name>
<comment type="subunit">
    <text evidence="1">Homodimer.</text>
</comment>
<comment type="similarity">
    <text evidence="1">Belongs to the UPF0210 family.</text>
</comment>
<gene>
    <name type="ordered locus">Dde_3704</name>
</gene>
<feature type="chain" id="PRO_1000066751" description="UPF0210 protein Dde_3704">
    <location>
        <begin position="1"/>
        <end position="456"/>
    </location>
</feature>
<reference key="1">
    <citation type="journal article" date="2011" name="J. Bacteriol.">
        <title>Complete genome sequence and updated annotation of Desulfovibrio alaskensis G20.</title>
        <authorList>
            <person name="Hauser L.J."/>
            <person name="Land M.L."/>
            <person name="Brown S.D."/>
            <person name="Larimer F."/>
            <person name="Keller K.L."/>
            <person name="Rapp-Giles B.J."/>
            <person name="Price M.N."/>
            <person name="Lin M."/>
            <person name="Bruce D.C."/>
            <person name="Detter J.C."/>
            <person name="Tapia R."/>
            <person name="Han C.S."/>
            <person name="Goodwin L.A."/>
            <person name="Cheng J.F."/>
            <person name="Pitluck S."/>
            <person name="Copeland A."/>
            <person name="Lucas S."/>
            <person name="Nolan M."/>
            <person name="Lapidus A.L."/>
            <person name="Palumbo A.V."/>
            <person name="Wall J.D."/>
        </authorList>
    </citation>
    <scope>NUCLEOTIDE SEQUENCE [LARGE SCALE GENOMIC DNA]</scope>
    <source>
        <strain>ATCC BAA-1058 / DSM 17464 / G20</strain>
    </source>
</reference>
<accession>Q30UZ9</accession>